<sequence>MVQAIKLNDLKNRKRKNVEEENGSDESEIDISSTDSENEEEQNGEEEIVNIDFDFFGGNPEVDFHALKNLLRQLFGPQESTRIQLSSLADLILGSPTTTIKTDGKESDPYCFLSFVDFKANHLSDYVKYLQKVDMRLSTFFKTMIDSGNKNCALVLSERLINMPPEVVPPLYKITLEDVATALGDDKHYDFYIIVTRKYEVNFDTDDDTDSGKRNKNKDERSKKRVKADEVDYFHEEDRFFEKYAKIHFESEAKKGVISSYMILDHEGLVKSIDELETEISTW</sequence>
<name>BCP1_YEAST</name>
<reference key="1">
    <citation type="journal article" date="1997" name="Nature">
        <title>The nucleotide sequence of Saccharomyces cerevisiae chromosome IV.</title>
        <authorList>
            <person name="Jacq C."/>
            <person name="Alt-Moerbe J."/>
            <person name="Andre B."/>
            <person name="Arnold W."/>
            <person name="Bahr A."/>
            <person name="Ballesta J.P.G."/>
            <person name="Bargues M."/>
            <person name="Baron L."/>
            <person name="Becker A."/>
            <person name="Biteau N."/>
            <person name="Bloecker H."/>
            <person name="Blugeon C."/>
            <person name="Boskovic J."/>
            <person name="Brandt P."/>
            <person name="Brueckner M."/>
            <person name="Buitrago M.J."/>
            <person name="Coster F."/>
            <person name="Delaveau T."/>
            <person name="del Rey F."/>
            <person name="Dujon B."/>
            <person name="Eide L.G."/>
            <person name="Garcia-Cantalejo J.M."/>
            <person name="Goffeau A."/>
            <person name="Gomez-Peris A."/>
            <person name="Granotier C."/>
            <person name="Hanemann V."/>
            <person name="Hankeln T."/>
            <person name="Hoheisel J.D."/>
            <person name="Jaeger W."/>
            <person name="Jimenez A."/>
            <person name="Jonniaux J.-L."/>
            <person name="Kraemer C."/>
            <person name="Kuester H."/>
            <person name="Laamanen P."/>
            <person name="Legros Y."/>
            <person name="Louis E.J."/>
            <person name="Moeller-Rieker S."/>
            <person name="Monnet A."/>
            <person name="Moro M."/>
            <person name="Mueller-Auer S."/>
            <person name="Nussbaumer B."/>
            <person name="Paricio N."/>
            <person name="Paulin L."/>
            <person name="Perea J."/>
            <person name="Perez-Alonso M."/>
            <person name="Perez-Ortin J.E."/>
            <person name="Pohl T.M."/>
            <person name="Prydz H."/>
            <person name="Purnelle B."/>
            <person name="Rasmussen S.W."/>
            <person name="Remacha M.A."/>
            <person name="Revuelta J.L."/>
            <person name="Rieger M."/>
            <person name="Salom D."/>
            <person name="Saluz H.P."/>
            <person name="Saiz J.E."/>
            <person name="Saren A.-M."/>
            <person name="Schaefer M."/>
            <person name="Scharfe M."/>
            <person name="Schmidt E.R."/>
            <person name="Schneider C."/>
            <person name="Scholler P."/>
            <person name="Schwarz S."/>
            <person name="Soler-Mira A."/>
            <person name="Urrestarazu L.A."/>
            <person name="Verhasselt P."/>
            <person name="Vissers S."/>
            <person name="Voet M."/>
            <person name="Volckaert G."/>
            <person name="Wagner G."/>
            <person name="Wambutt R."/>
            <person name="Wedler E."/>
            <person name="Wedler H."/>
            <person name="Woelfl S."/>
            <person name="Harris D.E."/>
            <person name="Bowman S."/>
            <person name="Brown D."/>
            <person name="Churcher C.M."/>
            <person name="Connor R."/>
            <person name="Dedman K."/>
            <person name="Gentles S."/>
            <person name="Hamlin N."/>
            <person name="Hunt S."/>
            <person name="Jones L."/>
            <person name="McDonald S."/>
            <person name="Murphy L.D."/>
            <person name="Niblett D."/>
            <person name="Odell C."/>
            <person name="Oliver K."/>
            <person name="Rajandream M.A."/>
            <person name="Richards C."/>
            <person name="Shore L."/>
            <person name="Walsh S.V."/>
            <person name="Barrell B.G."/>
            <person name="Dietrich F.S."/>
            <person name="Mulligan J.T."/>
            <person name="Allen E."/>
            <person name="Araujo R."/>
            <person name="Aviles E."/>
            <person name="Berno A."/>
            <person name="Carpenter J."/>
            <person name="Chen E."/>
            <person name="Cherry J.M."/>
            <person name="Chung E."/>
            <person name="Duncan M."/>
            <person name="Hunicke-Smith S."/>
            <person name="Hyman R.W."/>
            <person name="Komp C."/>
            <person name="Lashkari D."/>
            <person name="Lew H."/>
            <person name="Lin D."/>
            <person name="Mosedale D."/>
            <person name="Nakahara K."/>
            <person name="Namath A."/>
            <person name="Oefner P."/>
            <person name="Oh C."/>
            <person name="Petel F.X."/>
            <person name="Roberts D."/>
            <person name="Schramm S."/>
            <person name="Schroeder M."/>
            <person name="Shogren T."/>
            <person name="Shroff N."/>
            <person name="Winant A."/>
            <person name="Yelton M.A."/>
            <person name="Botstein D."/>
            <person name="Davis R.W."/>
            <person name="Johnston M."/>
            <person name="Andrews S."/>
            <person name="Brinkman R."/>
            <person name="Cooper J."/>
            <person name="Ding H."/>
            <person name="Du Z."/>
            <person name="Favello A."/>
            <person name="Fulton L."/>
            <person name="Gattung S."/>
            <person name="Greco T."/>
            <person name="Hallsworth K."/>
            <person name="Hawkins J."/>
            <person name="Hillier L.W."/>
            <person name="Jier M."/>
            <person name="Johnson D."/>
            <person name="Johnston L."/>
            <person name="Kirsten J."/>
            <person name="Kucaba T."/>
            <person name="Langston Y."/>
            <person name="Latreille P."/>
            <person name="Le T."/>
            <person name="Mardis E."/>
            <person name="Menezes S."/>
            <person name="Miller N."/>
            <person name="Nhan M."/>
            <person name="Pauley A."/>
            <person name="Peluso D."/>
            <person name="Rifkin L."/>
            <person name="Riles L."/>
            <person name="Taich A."/>
            <person name="Trevaskis E."/>
            <person name="Vignati D."/>
            <person name="Wilcox L."/>
            <person name="Wohldman P."/>
            <person name="Vaudin M."/>
            <person name="Wilson R."/>
            <person name="Waterston R."/>
            <person name="Albermann K."/>
            <person name="Hani J."/>
            <person name="Heumann K."/>
            <person name="Kleine K."/>
            <person name="Mewes H.-W."/>
            <person name="Zollner A."/>
            <person name="Zaccaria P."/>
        </authorList>
    </citation>
    <scope>NUCLEOTIDE SEQUENCE [LARGE SCALE GENOMIC DNA]</scope>
    <source>
        <strain>ATCC 204508 / S288c</strain>
    </source>
</reference>
<reference key="2">
    <citation type="journal article" date="2014" name="G3 (Bethesda)">
        <title>The reference genome sequence of Saccharomyces cerevisiae: Then and now.</title>
        <authorList>
            <person name="Engel S.R."/>
            <person name="Dietrich F.S."/>
            <person name="Fisk D.G."/>
            <person name="Binkley G."/>
            <person name="Balakrishnan R."/>
            <person name="Costanzo M.C."/>
            <person name="Dwight S.S."/>
            <person name="Hitz B.C."/>
            <person name="Karra K."/>
            <person name="Nash R.S."/>
            <person name="Weng S."/>
            <person name="Wong E.D."/>
            <person name="Lloyd P."/>
            <person name="Skrzypek M.S."/>
            <person name="Miyasato S.R."/>
            <person name="Simison M."/>
            <person name="Cherry J.M."/>
        </authorList>
    </citation>
    <scope>GENOME REANNOTATION</scope>
    <source>
        <strain>ATCC 204508 / S288c</strain>
    </source>
</reference>
<reference key="3">
    <citation type="journal article" date="2007" name="Genome Res.">
        <title>Approaching a complete repository of sequence-verified protein-encoding clones for Saccharomyces cerevisiae.</title>
        <authorList>
            <person name="Hu Y."/>
            <person name="Rolfs A."/>
            <person name="Bhullar B."/>
            <person name="Murthy T.V.S."/>
            <person name="Zhu C."/>
            <person name="Berger M.F."/>
            <person name="Camargo A.A."/>
            <person name="Kelley F."/>
            <person name="McCarron S."/>
            <person name="Jepson D."/>
            <person name="Richardson A."/>
            <person name="Raphael J."/>
            <person name="Moreira D."/>
            <person name="Taycher E."/>
            <person name="Zuo D."/>
            <person name="Mohr S."/>
            <person name="Kane M.F."/>
            <person name="Williamson J."/>
            <person name="Simpson A.J.G."/>
            <person name="Bulyk M.L."/>
            <person name="Harlow E."/>
            <person name="Marsischky G."/>
            <person name="Kolodner R.D."/>
            <person name="LaBaer J."/>
        </authorList>
    </citation>
    <scope>NUCLEOTIDE SEQUENCE [GENOMIC DNA]</scope>
    <source>
        <strain>ATCC 204508 / S288c</strain>
    </source>
</reference>
<reference key="4">
    <citation type="journal article" date="2003" name="EMBO J.">
        <title>Regulation of PI4,5P2 synthesis by nuclear-cytoplasmic shuttling of the Mss4 lipid kinase.</title>
        <authorList>
            <person name="Audhya A."/>
            <person name="Emr S.D."/>
        </authorList>
    </citation>
    <scope>FUNCTION</scope>
    <scope>SUBCELLULAR LOCATION</scope>
</reference>
<reference key="5">
    <citation type="journal article" date="2003" name="Nature">
        <title>Global analysis of protein localization in budding yeast.</title>
        <authorList>
            <person name="Huh W.-K."/>
            <person name="Falvo J.V."/>
            <person name="Gerke L.C."/>
            <person name="Carroll A.S."/>
            <person name="Howson R.W."/>
            <person name="Weissman J.S."/>
            <person name="O'Shea E.K."/>
        </authorList>
    </citation>
    <scope>SUBCELLULAR LOCATION [LARGE SCALE ANALYSIS]</scope>
</reference>
<reference key="6">
    <citation type="journal article" date="2003" name="Nature">
        <title>Global analysis of protein expression in yeast.</title>
        <authorList>
            <person name="Ghaemmaghami S."/>
            <person name="Huh W.-K."/>
            <person name="Bower K."/>
            <person name="Howson R.W."/>
            <person name="Belle A."/>
            <person name="Dephoure N."/>
            <person name="O'Shea E.K."/>
            <person name="Weissman J.S."/>
        </authorList>
    </citation>
    <scope>LEVEL OF PROTEIN EXPRESSION [LARGE SCALE ANALYSIS]</scope>
</reference>
<reference key="7">
    <citation type="journal article" date="2005" name="Proc. Natl. Acad. Sci. U.S.A.">
        <title>Combining chemical genetics and proteomics to identify protein kinase substrates.</title>
        <authorList>
            <person name="Dephoure N."/>
            <person name="Howson R.W."/>
            <person name="Blethrow J.D."/>
            <person name="Shokat K.M."/>
            <person name="O'Shea E.K."/>
        </authorList>
    </citation>
    <scope>PHOSPHORYLATION BY THE PHO85-PCL1 KINASE COMPLEX</scope>
</reference>
<reference key="8">
    <citation type="journal article" date="2007" name="J. Proteome Res.">
        <title>Large-scale phosphorylation analysis of alpha-factor-arrested Saccharomyces cerevisiae.</title>
        <authorList>
            <person name="Li X."/>
            <person name="Gerber S.A."/>
            <person name="Rudner A.D."/>
            <person name="Beausoleil S.A."/>
            <person name="Haas W."/>
            <person name="Villen J."/>
            <person name="Elias J.E."/>
            <person name="Gygi S.P."/>
        </authorList>
    </citation>
    <scope>PHOSPHORYLATION [LARGE SCALE ANALYSIS] AT THR-205 AND THR-209</scope>
    <scope>IDENTIFICATION BY MASS SPECTROMETRY [LARGE SCALE ANALYSIS]</scope>
    <source>
        <strain>ADR376</strain>
    </source>
</reference>
<reference key="9">
    <citation type="journal article" date="2008" name="Mol. Cell. Proteomics">
        <title>A multidimensional chromatography technology for in-depth phosphoproteome analysis.</title>
        <authorList>
            <person name="Albuquerque C.P."/>
            <person name="Smolka M.B."/>
            <person name="Payne S.H."/>
            <person name="Bafna V."/>
            <person name="Eng J."/>
            <person name="Zhou H."/>
        </authorList>
    </citation>
    <scope>PHOSPHORYLATION [LARGE SCALE ANALYSIS] AT THR-205</scope>
    <scope>IDENTIFICATION BY MASS SPECTROMETRY [LARGE SCALE ANALYSIS]</scope>
</reference>
<reference key="10">
    <citation type="journal article" date="2009" name="Science">
        <title>Global analysis of Cdk1 substrate phosphorylation sites provides insights into evolution.</title>
        <authorList>
            <person name="Holt L.J."/>
            <person name="Tuch B.B."/>
            <person name="Villen J."/>
            <person name="Johnson A.D."/>
            <person name="Gygi S.P."/>
            <person name="Morgan D.O."/>
        </authorList>
    </citation>
    <scope>PHOSPHORYLATION [LARGE SCALE ANALYSIS] AT THR-205 AND THR-209</scope>
    <scope>IDENTIFICATION BY MASS SPECTROMETRY [LARGE SCALE ANALYSIS]</scope>
</reference>
<reference key="11">
    <citation type="journal article" date="2012" name="Proc. Natl. Acad. Sci. U.S.A.">
        <title>N-terminal acetylome analyses and functional insights of the N-terminal acetyltransferase NatB.</title>
        <authorList>
            <person name="Van Damme P."/>
            <person name="Lasa M."/>
            <person name="Polevoda B."/>
            <person name="Gazquez C."/>
            <person name="Elosegui-Artola A."/>
            <person name="Kim D.S."/>
            <person name="De Juan-Pardo E."/>
            <person name="Demeyer K."/>
            <person name="Hole K."/>
            <person name="Larrea E."/>
            <person name="Timmerman E."/>
            <person name="Prieto J."/>
            <person name="Arnesen T."/>
            <person name="Sherman F."/>
            <person name="Gevaert K."/>
            <person name="Aldabe R."/>
        </authorList>
    </citation>
    <scope>IDENTIFICATION BY MASS SPECTROMETRY [LARGE SCALE ANALYSIS]</scope>
</reference>
<comment type="function">
    <text evidence="2">Involved in nuclear export of the lipid kinase MSS4 and of the 60S ribosomal subunit. May also play a role in directing MSS4 to the plasma membrane. Plays a role in actin cytoskeleton organization and vesicular transport.</text>
</comment>
<comment type="interaction">
    <interactant intactId="EBI-33582">
        <id>Q06338</id>
    </interactant>
    <interactant intactId="EBI-30703">
        <id>Q08961</id>
        <label>RKM1</label>
    </interactant>
    <organismsDiffer>false</organismsDiffer>
    <experiments>3</experiments>
</comment>
<comment type="subcellular location">
    <subcellularLocation>
        <location evidence="2">Cytoplasm</location>
    </subcellularLocation>
    <subcellularLocation>
        <location evidence="2">Nucleus</location>
    </subcellularLocation>
</comment>
<comment type="PTM">
    <text evidence="4">Phosphorylated by the PHO85-PCL1 kinase complex.</text>
</comment>
<comment type="miscellaneous">
    <text evidence="3">Present with 4590 molecules/cell in log phase SD medium.</text>
</comment>
<comment type="similarity">
    <text evidence="5">Belongs to the BCP1 family.</text>
</comment>
<feature type="chain" id="PRO_0000239628" description="Protein BCP1">
    <location>
        <begin position="1"/>
        <end position="283"/>
    </location>
</feature>
<feature type="region of interest" description="Disordered" evidence="1">
    <location>
        <begin position="12"/>
        <end position="44"/>
    </location>
</feature>
<feature type="compositionally biased region" description="Acidic residues" evidence="1">
    <location>
        <begin position="20"/>
        <end position="29"/>
    </location>
</feature>
<feature type="modified residue" description="Phosphothreonine" evidence="6 7 8">
    <location>
        <position position="205"/>
    </location>
</feature>
<feature type="modified residue" description="Phosphothreonine" evidence="6 8">
    <location>
        <position position="209"/>
    </location>
</feature>
<feature type="turn" evidence="9">
    <location>
        <begin position="39"/>
        <end position="42"/>
    </location>
</feature>
<feature type="strand" evidence="9">
    <location>
        <begin position="47"/>
        <end position="50"/>
    </location>
</feature>
<feature type="strand" evidence="9">
    <location>
        <begin position="54"/>
        <end position="57"/>
    </location>
</feature>
<feature type="turn" evidence="9">
    <location>
        <begin position="60"/>
        <end position="62"/>
    </location>
</feature>
<feature type="helix" evidence="9">
    <location>
        <begin position="64"/>
        <end position="79"/>
    </location>
</feature>
<feature type="helix" evidence="9">
    <location>
        <begin position="80"/>
        <end position="82"/>
    </location>
</feature>
<feature type="helix" evidence="9">
    <location>
        <begin position="85"/>
        <end position="93"/>
    </location>
</feature>
<feature type="strand" evidence="9">
    <location>
        <begin position="95"/>
        <end position="103"/>
    </location>
</feature>
<feature type="strand" evidence="9">
    <location>
        <begin position="110"/>
        <end position="117"/>
    </location>
</feature>
<feature type="helix" evidence="9">
    <location>
        <begin position="119"/>
        <end position="121"/>
    </location>
</feature>
<feature type="helix" evidence="9">
    <location>
        <begin position="125"/>
        <end position="133"/>
    </location>
</feature>
<feature type="helix" evidence="9">
    <location>
        <begin position="135"/>
        <end position="144"/>
    </location>
</feature>
<feature type="turn" evidence="9">
    <location>
        <begin position="145"/>
        <end position="147"/>
    </location>
</feature>
<feature type="strand" evidence="9">
    <location>
        <begin position="152"/>
        <end position="159"/>
    </location>
</feature>
<feature type="helix" evidence="9">
    <location>
        <begin position="165"/>
        <end position="167"/>
    </location>
</feature>
<feature type="helix" evidence="9">
    <location>
        <begin position="168"/>
        <end position="183"/>
    </location>
</feature>
<feature type="strand" evidence="9">
    <location>
        <begin position="190"/>
        <end position="200"/>
    </location>
</feature>
<feature type="strand" evidence="9">
    <location>
        <begin position="231"/>
        <end position="235"/>
    </location>
</feature>
<feature type="helix" evidence="9">
    <location>
        <begin position="238"/>
        <end position="244"/>
    </location>
</feature>
<feature type="strand" evidence="9">
    <location>
        <begin position="246"/>
        <end position="250"/>
    </location>
</feature>
<feature type="strand" evidence="9">
    <location>
        <begin position="257"/>
        <end position="265"/>
    </location>
</feature>
<feature type="helix" evidence="9">
    <location>
        <begin position="266"/>
        <end position="276"/>
    </location>
</feature>
<feature type="helix" evidence="9">
    <location>
        <begin position="279"/>
        <end position="283"/>
    </location>
</feature>
<proteinExistence type="evidence at protein level"/>
<dbReference type="EMBL" id="U28372">
    <property type="protein sequence ID" value="AAB64795.1"/>
    <property type="molecule type" value="Genomic_DNA"/>
</dbReference>
<dbReference type="EMBL" id="AY557741">
    <property type="protein sequence ID" value="AAS56067.1"/>
    <property type="molecule type" value="Genomic_DNA"/>
</dbReference>
<dbReference type="EMBL" id="BK006938">
    <property type="protein sequence ID" value="DAA12199.1"/>
    <property type="molecule type" value="Genomic_DNA"/>
</dbReference>
<dbReference type="PIR" id="S61156">
    <property type="entry name" value="S61156"/>
</dbReference>
<dbReference type="RefSeq" id="NP_010648.3">
    <property type="nucleotide sequence ID" value="NM_001180669.3"/>
</dbReference>
<dbReference type="PDB" id="7C4H">
    <property type="method" value="X-ray"/>
    <property type="resolution" value="1.83 A"/>
    <property type="chains" value="A/B=1-283"/>
</dbReference>
<dbReference type="PDBsum" id="7C4H"/>
<dbReference type="SMR" id="Q06338"/>
<dbReference type="BioGRID" id="32416">
    <property type="interactions" value="161"/>
</dbReference>
<dbReference type="DIP" id="DIP-5127N"/>
<dbReference type="FunCoup" id="Q06338">
    <property type="interactions" value="1137"/>
</dbReference>
<dbReference type="IntAct" id="Q06338">
    <property type="interactions" value="16"/>
</dbReference>
<dbReference type="MINT" id="Q06338"/>
<dbReference type="STRING" id="4932.YDR361C"/>
<dbReference type="iPTMnet" id="Q06338"/>
<dbReference type="PaxDb" id="4932-YDR361C"/>
<dbReference type="PeptideAtlas" id="Q06338"/>
<dbReference type="EnsemblFungi" id="YDR361C_mRNA">
    <property type="protein sequence ID" value="YDR361C"/>
    <property type="gene ID" value="YDR361C"/>
</dbReference>
<dbReference type="GeneID" id="851963"/>
<dbReference type="KEGG" id="sce:YDR361C"/>
<dbReference type="AGR" id="SGD:S000002769"/>
<dbReference type="SGD" id="S000002769">
    <property type="gene designation" value="BCP1"/>
</dbReference>
<dbReference type="VEuPathDB" id="FungiDB:YDR361C"/>
<dbReference type="eggNOG" id="KOG3034">
    <property type="taxonomic scope" value="Eukaryota"/>
</dbReference>
<dbReference type="GeneTree" id="ENSGT00390000000696"/>
<dbReference type="HOGENOM" id="CLU_068770_2_1_1"/>
<dbReference type="InParanoid" id="Q06338"/>
<dbReference type="OMA" id="VKFYRKE"/>
<dbReference type="OrthoDB" id="27543at2759"/>
<dbReference type="BioCyc" id="YEAST:G3O-29911-MONOMER"/>
<dbReference type="BioGRID-ORCS" id="851963">
    <property type="hits" value="0 hits in 10 CRISPR screens"/>
</dbReference>
<dbReference type="CD-CODE" id="E03F929F">
    <property type="entry name" value="Stress granule"/>
</dbReference>
<dbReference type="PRO" id="PR:Q06338"/>
<dbReference type="Proteomes" id="UP000002311">
    <property type="component" value="Chromosome IV"/>
</dbReference>
<dbReference type="RNAct" id="Q06338">
    <property type="molecule type" value="protein"/>
</dbReference>
<dbReference type="GO" id="GO:0005737">
    <property type="term" value="C:cytoplasm"/>
    <property type="evidence" value="ECO:0007005"/>
    <property type="project" value="SGD"/>
</dbReference>
<dbReference type="GO" id="GO:0005634">
    <property type="term" value="C:nucleus"/>
    <property type="evidence" value="ECO:0007005"/>
    <property type="project" value="SGD"/>
</dbReference>
<dbReference type="GO" id="GO:0044183">
    <property type="term" value="F:protein folding chaperone"/>
    <property type="evidence" value="ECO:0000314"/>
    <property type="project" value="SGD"/>
</dbReference>
<dbReference type="GO" id="GO:0006611">
    <property type="term" value="P:protein export from nucleus"/>
    <property type="evidence" value="ECO:0000315"/>
    <property type="project" value="SGD"/>
</dbReference>
<dbReference type="GO" id="GO:0000055">
    <property type="term" value="P:ribosomal large subunit export from nucleus"/>
    <property type="evidence" value="ECO:0000315"/>
    <property type="project" value="SGD"/>
</dbReference>
<dbReference type="InterPro" id="IPR025602">
    <property type="entry name" value="BCP1_family"/>
</dbReference>
<dbReference type="PANTHER" id="PTHR13261">
    <property type="entry name" value="BRCA2 AND CDKN1A INTERACTING PROTEIN"/>
    <property type="match status" value="1"/>
</dbReference>
<dbReference type="PANTHER" id="PTHR13261:SF0">
    <property type="entry name" value="BRCA2 AND CDKN1A-INTERACTING PROTEIN"/>
    <property type="match status" value="1"/>
</dbReference>
<dbReference type="Pfam" id="PF13862">
    <property type="entry name" value="BCCIP"/>
    <property type="match status" value="1"/>
</dbReference>
<dbReference type="PIRSF" id="PIRSF028983">
    <property type="entry name" value="BCP1"/>
    <property type="match status" value="1"/>
</dbReference>
<organism>
    <name type="scientific">Saccharomyces cerevisiae (strain ATCC 204508 / S288c)</name>
    <name type="common">Baker's yeast</name>
    <dbReference type="NCBI Taxonomy" id="559292"/>
    <lineage>
        <taxon>Eukaryota</taxon>
        <taxon>Fungi</taxon>
        <taxon>Dikarya</taxon>
        <taxon>Ascomycota</taxon>
        <taxon>Saccharomycotina</taxon>
        <taxon>Saccharomycetes</taxon>
        <taxon>Saccharomycetales</taxon>
        <taxon>Saccharomycetaceae</taxon>
        <taxon>Saccharomyces</taxon>
    </lineage>
</organism>
<keyword id="KW-0002">3D-structure</keyword>
<keyword id="KW-0963">Cytoplasm</keyword>
<keyword id="KW-0539">Nucleus</keyword>
<keyword id="KW-0597">Phosphoprotein</keyword>
<keyword id="KW-0653">Protein transport</keyword>
<keyword id="KW-1185">Reference proteome</keyword>
<keyword id="KW-0813">Transport</keyword>
<accession>Q06338</accession>
<accession>D6VSY9</accession>
<evidence type="ECO:0000256" key="1">
    <source>
        <dbReference type="SAM" id="MobiDB-lite"/>
    </source>
</evidence>
<evidence type="ECO:0000269" key="2">
    <source>
    </source>
</evidence>
<evidence type="ECO:0000269" key="3">
    <source>
    </source>
</evidence>
<evidence type="ECO:0000269" key="4">
    <source>
    </source>
</evidence>
<evidence type="ECO:0000305" key="5"/>
<evidence type="ECO:0007744" key="6">
    <source>
    </source>
</evidence>
<evidence type="ECO:0007744" key="7">
    <source>
    </source>
</evidence>
<evidence type="ECO:0007744" key="8">
    <source>
    </source>
</evidence>
<evidence type="ECO:0007829" key="9">
    <source>
        <dbReference type="PDB" id="7C4H"/>
    </source>
</evidence>
<gene>
    <name type="primary">BCP1</name>
    <name type="ordered locus">YDR361C</name>
</gene>
<protein>
    <recommendedName>
        <fullName>Protein BCP1</fullName>
    </recommendedName>
</protein>